<dbReference type="EMBL" id="AY181984">
    <property type="protein sequence ID" value="AAO62996.1"/>
    <property type="molecule type" value="mRNA"/>
</dbReference>
<dbReference type="EMBL" id="AY299475">
    <property type="protein sequence ID" value="AAP81292.1"/>
    <property type="molecule type" value="mRNA"/>
</dbReference>
<dbReference type="SMR" id="Q7ZT98"/>
<dbReference type="TopDownProteomics" id="Q7ZT98"/>
<dbReference type="GO" id="GO:0005576">
    <property type="term" value="C:extracellular region"/>
    <property type="evidence" value="ECO:0007669"/>
    <property type="project" value="UniProtKB-SubCell"/>
</dbReference>
<dbReference type="GO" id="GO:0005246">
    <property type="term" value="F:calcium channel regulator activity"/>
    <property type="evidence" value="ECO:0007669"/>
    <property type="project" value="UniProtKB-KW"/>
</dbReference>
<dbReference type="GO" id="GO:0090729">
    <property type="term" value="F:toxin activity"/>
    <property type="evidence" value="ECO:0007669"/>
    <property type="project" value="UniProtKB-KW"/>
</dbReference>
<dbReference type="CDD" id="cd05383">
    <property type="entry name" value="CAP_CRISP"/>
    <property type="match status" value="1"/>
</dbReference>
<dbReference type="FunFam" id="1.10.10.740:FF:000001">
    <property type="entry name" value="Cysteine-rich secretory protein 2"/>
    <property type="match status" value="1"/>
</dbReference>
<dbReference type="FunFam" id="3.40.33.10:FF:000005">
    <property type="entry name" value="Cysteine-rich secretory protein 2"/>
    <property type="match status" value="1"/>
</dbReference>
<dbReference type="Gene3D" id="3.40.33.10">
    <property type="entry name" value="CAP"/>
    <property type="match status" value="1"/>
</dbReference>
<dbReference type="Gene3D" id="1.10.10.740">
    <property type="entry name" value="Crisp domain"/>
    <property type="match status" value="1"/>
</dbReference>
<dbReference type="InterPro" id="IPR018244">
    <property type="entry name" value="Allrgn_V5/Tpx1_CS"/>
</dbReference>
<dbReference type="InterPro" id="IPR014044">
    <property type="entry name" value="CAP_dom"/>
</dbReference>
<dbReference type="InterPro" id="IPR035940">
    <property type="entry name" value="CAP_sf"/>
</dbReference>
<dbReference type="InterPro" id="IPR042076">
    <property type="entry name" value="Crisp-like_dom"/>
</dbReference>
<dbReference type="InterPro" id="IPR001283">
    <property type="entry name" value="CRISP-related"/>
</dbReference>
<dbReference type="InterPro" id="IPR013871">
    <property type="entry name" value="Cysteine_rich_secretory"/>
</dbReference>
<dbReference type="InterPro" id="IPR034117">
    <property type="entry name" value="SCP_CRISP"/>
</dbReference>
<dbReference type="InterPro" id="IPR003582">
    <property type="entry name" value="ShKT_dom"/>
</dbReference>
<dbReference type="PANTHER" id="PTHR10334">
    <property type="entry name" value="CYSTEINE-RICH SECRETORY PROTEIN-RELATED"/>
    <property type="match status" value="1"/>
</dbReference>
<dbReference type="Pfam" id="PF00188">
    <property type="entry name" value="CAP"/>
    <property type="match status" value="1"/>
</dbReference>
<dbReference type="Pfam" id="PF08562">
    <property type="entry name" value="Crisp"/>
    <property type="match status" value="1"/>
</dbReference>
<dbReference type="PRINTS" id="PR00837">
    <property type="entry name" value="V5TPXLIKE"/>
</dbReference>
<dbReference type="SMART" id="SM00198">
    <property type="entry name" value="SCP"/>
    <property type="match status" value="1"/>
</dbReference>
<dbReference type="SUPFAM" id="SSF57546">
    <property type="entry name" value="Crisp domain-like"/>
    <property type="match status" value="1"/>
</dbReference>
<dbReference type="SUPFAM" id="SSF55797">
    <property type="entry name" value="PR-1-like"/>
    <property type="match status" value="1"/>
</dbReference>
<dbReference type="PROSITE" id="PS01009">
    <property type="entry name" value="CRISP_1"/>
    <property type="match status" value="1"/>
</dbReference>
<dbReference type="PROSITE" id="PS01010">
    <property type="entry name" value="CRISP_2"/>
    <property type="match status" value="1"/>
</dbReference>
<dbReference type="PROSITE" id="PS51670">
    <property type="entry name" value="SHKT"/>
    <property type="match status" value="1"/>
</dbReference>
<evidence type="ECO:0000255" key="1">
    <source>
        <dbReference type="PROSITE-ProRule" id="PRU01005"/>
    </source>
</evidence>
<evidence type="ECO:0000269" key="2">
    <source>
    </source>
</evidence>
<evidence type="ECO:0000305" key="3"/>
<organism>
    <name type="scientific">Ophiophagus hannah</name>
    <name type="common">King cobra</name>
    <name type="synonym">Naja hannah</name>
    <dbReference type="NCBI Taxonomy" id="8665"/>
    <lineage>
        <taxon>Eukaryota</taxon>
        <taxon>Metazoa</taxon>
        <taxon>Chordata</taxon>
        <taxon>Craniata</taxon>
        <taxon>Vertebrata</taxon>
        <taxon>Euteleostomi</taxon>
        <taxon>Lepidosauria</taxon>
        <taxon>Squamata</taxon>
        <taxon>Bifurcata</taxon>
        <taxon>Unidentata</taxon>
        <taxon>Episquamata</taxon>
        <taxon>Toxicofera</taxon>
        <taxon>Serpentes</taxon>
        <taxon>Colubroidea</taxon>
        <taxon>Elapidae</taxon>
        <taxon>Elapinae</taxon>
        <taxon>Ophiophagus</taxon>
    </lineage>
</organism>
<keyword id="KW-0108">Calcium channel impairing toxin</keyword>
<keyword id="KW-0903">Direct protein sequencing</keyword>
<keyword id="KW-1015">Disulfide bond</keyword>
<keyword id="KW-0872">Ion channel impairing toxin</keyword>
<keyword id="KW-0528">Neurotoxin</keyword>
<keyword id="KW-0964">Secreted</keyword>
<keyword id="KW-0732">Signal</keyword>
<keyword id="KW-0800">Toxin</keyword>
<sequence length="239" mass="26869">MIAFTLLSLAAVLQQSFGNVDFNSESTRRQKKQKEIVDLHNSLRRSVSPTASNMLKMQWYPEAASNAERWASNCNLGHSPDYSRVLEGIECGENIYMSSNPRAWTEIIQLWHDEYKNFVYGVGANPPGSVTGHYTQIVWYKTYRIGCAVNYCPSSEYSYFYVCQYCPSGNMRGSTATPYKSGPTCGDCPSACDNGLCTNPCTLYNEYTNCDSLVKQSSCQDEWIKSKCPASCFCHNKII</sequence>
<proteinExistence type="evidence at protein level"/>
<protein>
    <recommendedName>
        <fullName>Cysteine-rich venom protein ophanin</fullName>
        <shortName>CRVP</shortName>
    </recommendedName>
    <alternativeName>
        <fullName>Opharin</fullName>
    </alternativeName>
</protein>
<comment type="function">
    <text evidence="2">Weakly blocks contraction of smooth muscle elicited by high potassium-induced depolarization, but does not block caffeine-stimulated contraction. May target voltage-gated calcium channels on smooth muscle.</text>
</comment>
<comment type="subcellular location">
    <subcellularLocation>
        <location>Secreted</location>
    </subcellularLocation>
</comment>
<comment type="tissue specificity">
    <text>Expressed by the venom gland.</text>
</comment>
<comment type="mass spectrometry" mass="25037.4" error="67.6" method="MALDI" evidence="2"/>
<comment type="similarity">
    <text evidence="3">Belongs to the CRISP family.</text>
</comment>
<reference key="1">
    <citation type="journal article" date="2003" name="Arch. Biochem. Biophys.">
        <title>Wide distribution of cysteine-rich secretory proteins in snake venoms: isolation and cloning of novel snake venom cysteine-rich secretory proteins.</title>
        <authorList>
            <person name="Yamazaki Y."/>
            <person name="Hyodo F."/>
            <person name="Morita T."/>
        </authorList>
    </citation>
    <scope>NUCLEOTIDE SEQUENCE [MRNA]</scope>
    <scope>PROTEIN SEQUENCE OF 19-58; 60-66; 117-141; 181-225 AND 228-237</scope>
    <scope>CHARACTERIZATION</scope>
    <scope>FUNCTION</scope>
    <scope>MASS SPECTROMETRY</scope>
    <source>
        <tissue>Venom gland</tissue>
    </source>
</reference>
<reference key="2">
    <citation type="submission" date="2003-05" db="EMBL/GenBank/DDBJ databases">
        <authorList>
            <person name="Pung Y.F."/>
            <person name="Kumar P.P."/>
            <person name="Kini R.M."/>
        </authorList>
    </citation>
    <scope>NUCLEOTIDE SEQUENCE [MRNA]</scope>
    <source>
        <tissue>Venom gland</tissue>
    </source>
</reference>
<reference key="3">
    <citation type="journal article" date="2013" name="Proc. Natl. Acad. Sci. U.S.A.">
        <title>The king cobra genome reveals dynamic gene evolution and adaptation in the snake venom system.</title>
        <authorList>
            <person name="Vonk F.J."/>
            <person name="Casewell N.R."/>
            <person name="Henkel C.V."/>
            <person name="Heimberg A.M."/>
            <person name="Jansen H.J."/>
            <person name="McCleary R.J."/>
            <person name="Kerkkamp H.M."/>
            <person name="Vos R.A."/>
            <person name="Guerreiro I."/>
            <person name="Calvete J.J."/>
            <person name="Wuster W."/>
            <person name="Woods A.E."/>
            <person name="Logan J.M."/>
            <person name="Harrison R.A."/>
            <person name="Castoe T.A."/>
            <person name="de Koning A.P."/>
            <person name="Pollock D.D."/>
            <person name="Yandell M."/>
            <person name="Calderon D."/>
            <person name="Renjifo C."/>
            <person name="Currier R.B."/>
            <person name="Salgado D."/>
            <person name="Pla D."/>
            <person name="Sanz L."/>
            <person name="Hyder A.S."/>
            <person name="Ribeiro J.M."/>
            <person name="Arntzen J.W."/>
            <person name="van den Thillart G.E."/>
            <person name="Boetzer M."/>
            <person name="Pirovano W."/>
            <person name="Dirks R.P."/>
            <person name="Spaink H.P."/>
            <person name="Duboule D."/>
            <person name="McGlinn E."/>
            <person name="Kini R.M."/>
            <person name="Richardson M.K."/>
        </authorList>
    </citation>
    <scope>IDENTIFICATION BY MASS SPECTROMETRY</scope>
    <source>
        <tissue>Venom</tissue>
    </source>
</reference>
<name>CRVP_OPHHA</name>
<accession>Q7ZT98</accession>
<accession>Q7T1R6</accession>
<feature type="signal peptide" evidence="2">
    <location>
        <begin position="1"/>
        <end position="18"/>
    </location>
</feature>
<feature type="chain" id="PRO_0000006281" description="Cysteine-rich venom protein ophanin">
    <location>
        <begin position="19"/>
        <end position="239"/>
    </location>
</feature>
<feature type="domain" description="SCP">
    <location>
        <begin position="37"/>
        <end position="165"/>
    </location>
</feature>
<feature type="domain" description="ShKT" evidence="1">
    <location>
        <begin position="201"/>
        <end position="234"/>
    </location>
</feature>
<feature type="disulfide bond" evidence="1">
    <location>
        <begin position="74"/>
        <end position="152"/>
    </location>
</feature>
<feature type="disulfide bond" evidence="1">
    <location>
        <begin position="91"/>
        <end position="166"/>
    </location>
</feature>
<feature type="disulfide bond" evidence="1">
    <location>
        <begin position="147"/>
        <end position="163"/>
    </location>
</feature>
<feature type="disulfide bond" evidence="1">
    <location>
        <begin position="185"/>
        <end position="192"/>
    </location>
</feature>
<feature type="disulfide bond" evidence="1">
    <location>
        <begin position="188"/>
        <end position="197"/>
    </location>
</feature>
<feature type="disulfide bond" evidence="1">
    <location>
        <begin position="201"/>
        <end position="234"/>
    </location>
</feature>
<feature type="disulfide bond" evidence="1">
    <location>
        <begin position="210"/>
        <end position="228"/>
    </location>
</feature>
<feature type="disulfide bond" evidence="1">
    <location>
        <begin position="219"/>
        <end position="232"/>
    </location>
</feature>
<feature type="sequence conflict" description="In Ref. 2; AAP81292." evidence="3" ref="2">
    <original>E</original>
    <variation>Q</variation>
    <location>
        <position position="90"/>
    </location>
</feature>
<feature type="sequence conflict" description="In Ref. 2; AAP81292." evidence="3" ref="2">
    <original>S</original>
    <variation>N</variation>
    <location>
        <position position="158"/>
    </location>
</feature>